<feature type="signal peptide" evidence="1">
    <location>
        <begin position="1"/>
        <end position="15"/>
    </location>
</feature>
<feature type="chain" id="PRO_0000210396" description="Glycerol 3-phosphate oxidase">
    <location>
        <begin position="16"/>
        <end position="384"/>
    </location>
</feature>
<feature type="active site" description="Proton acceptor" evidence="8">
    <location>
        <position position="51"/>
    </location>
</feature>
<feature type="binding site" evidence="3 10">
    <location>
        <position position="14"/>
    </location>
    <ligand>
        <name>FAD</name>
        <dbReference type="ChEBI" id="CHEBI:57692"/>
    </ligand>
</feature>
<feature type="binding site" evidence="3 10">
    <location>
        <position position="33"/>
    </location>
    <ligand>
        <name>FAD</name>
        <dbReference type="ChEBI" id="CHEBI:57692"/>
    </ligand>
</feature>
<feature type="binding site" evidence="3 10">
    <location>
        <begin position="42"/>
        <end position="43"/>
    </location>
    <ligand>
        <name>FAD</name>
        <dbReference type="ChEBI" id="CHEBI:57692"/>
    </ligand>
</feature>
<feature type="binding site" evidence="3 10">
    <location>
        <begin position="47"/>
        <end position="49"/>
    </location>
    <ligand>
        <name>FAD</name>
        <dbReference type="ChEBI" id="CHEBI:57692"/>
    </ligand>
</feature>
<feature type="binding site" evidence="10">
    <location>
        <position position="47"/>
    </location>
    <ligand>
        <name>sn-glycerol 3-phosphate</name>
        <dbReference type="ChEBI" id="CHEBI:57597"/>
    </ligand>
</feature>
<feature type="binding site" evidence="10">
    <location>
        <position position="51"/>
    </location>
    <ligand>
        <name>sn-glycerol 3-phosphate</name>
        <dbReference type="ChEBI" id="CHEBI:57597"/>
    </ligand>
</feature>
<feature type="binding site" evidence="3 10">
    <location>
        <position position="177"/>
    </location>
    <ligand>
        <name>FAD</name>
        <dbReference type="ChEBI" id="CHEBI:57692"/>
    </ligand>
</feature>
<feature type="binding site" evidence="10">
    <location>
        <position position="258"/>
    </location>
    <ligand>
        <name>sn-glycerol 3-phosphate</name>
        <dbReference type="ChEBI" id="CHEBI:57597"/>
    </ligand>
</feature>
<feature type="binding site" evidence="10">
    <location>
        <position position="320"/>
    </location>
    <ligand>
        <name>sn-glycerol 3-phosphate</name>
        <dbReference type="ChEBI" id="CHEBI:57597"/>
    </ligand>
</feature>
<feature type="binding site" evidence="3 10">
    <location>
        <begin position="346"/>
        <end position="347"/>
    </location>
    <ligand>
        <name>FAD</name>
        <dbReference type="ChEBI" id="CHEBI:57692"/>
    </ligand>
</feature>
<feature type="binding site" evidence="10">
    <location>
        <position position="348"/>
    </location>
    <ligand>
        <name>sn-glycerol 3-phosphate</name>
        <dbReference type="ChEBI" id="CHEBI:57597"/>
    </ligand>
</feature>
<feature type="binding site" evidence="3 10">
    <location>
        <position position="352"/>
    </location>
    <ligand>
        <name>FAD</name>
        <dbReference type="ChEBI" id="CHEBI:57692"/>
    </ligand>
</feature>
<feature type="lipid moiety-binding region" description="N-palmitoyl cysteine" evidence="1">
    <location>
        <position position="16"/>
    </location>
</feature>
<feature type="lipid moiety-binding region" description="S-diacylglycerol cysteine" evidence="1">
    <location>
        <position position="16"/>
    </location>
</feature>
<feature type="strand" evidence="12">
    <location>
        <begin position="2"/>
        <end position="9"/>
    </location>
</feature>
<feature type="helix" evidence="12">
    <location>
        <begin position="13"/>
        <end position="22"/>
    </location>
</feature>
<feature type="strand" evidence="12">
    <location>
        <begin position="25"/>
        <end position="27"/>
    </location>
</feature>
<feature type="strand" evidence="12">
    <location>
        <begin position="29"/>
        <end position="32"/>
    </location>
</feature>
<feature type="strand" evidence="12">
    <location>
        <begin position="34"/>
        <end position="39"/>
    </location>
</feature>
<feature type="turn" evidence="12">
    <location>
        <begin position="42"/>
        <end position="44"/>
    </location>
</feature>
<feature type="strand" evidence="12">
    <location>
        <begin position="53"/>
        <end position="56"/>
    </location>
</feature>
<feature type="helix" evidence="12">
    <location>
        <begin position="61"/>
        <end position="75"/>
    </location>
</feature>
<feature type="helix" evidence="12">
    <location>
        <begin position="77"/>
        <end position="80"/>
    </location>
</feature>
<feature type="strand" evidence="12">
    <location>
        <begin position="85"/>
        <end position="87"/>
    </location>
</feature>
<feature type="strand" evidence="12">
    <location>
        <begin position="90"/>
        <end position="96"/>
    </location>
</feature>
<feature type="helix" evidence="12">
    <location>
        <begin position="97"/>
        <end position="112"/>
    </location>
</feature>
<feature type="helix" evidence="12">
    <location>
        <begin position="117"/>
        <end position="119"/>
    </location>
</feature>
<feature type="strand" evidence="12">
    <location>
        <begin position="120"/>
        <end position="124"/>
    </location>
</feature>
<feature type="helix" evidence="12">
    <location>
        <begin position="125"/>
        <end position="131"/>
    </location>
</feature>
<feature type="strand" evidence="12">
    <location>
        <begin position="141"/>
        <end position="145"/>
    </location>
</feature>
<feature type="strand" evidence="12">
    <location>
        <begin position="149"/>
        <end position="151"/>
    </location>
</feature>
<feature type="helix" evidence="12">
    <location>
        <begin position="153"/>
        <end position="166"/>
    </location>
</feature>
<feature type="strand" evidence="12">
    <location>
        <begin position="170"/>
        <end position="172"/>
    </location>
</feature>
<feature type="strand" evidence="12">
    <location>
        <begin position="177"/>
        <end position="182"/>
    </location>
</feature>
<feature type="strand" evidence="12">
    <location>
        <begin position="188"/>
        <end position="192"/>
    </location>
</feature>
<feature type="strand" evidence="12">
    <location>
        <begin position="199"/>
        <end position="207"/>
    </location>
</feature>
<feature type="helix" evidence="12">
    <location>
        <begin position="210"/>
        <end position="212"/>
    </location>
</feature>
<feature type="helix" evidence="12">
    <location>
        <begin position="213"/>
        <end position="219"/>
    </location>
</feature>
<feature type="strand" evidence="12">
    <location>
        <begin position="227"/>
        <end position="237"/>
    </location>
</feature>
<feature type="strand" evidence="12">
    <location>
        <begin position="246"/>
        <end position="251"/>
    </location>
</feature>
<feature type="helix" evidence="12">
    <location>
        <begin position="253"/>
        <end position="256"/>
    </location>
</feature>
<feature type="strand" evidence="12">
    <location>
        <begin position="261"/>
        <end position="264"/>
    </location>
</feature>
<feature type="strand" evidence="12">
    <location>
        <begin position="270"/>
        <end position="273"/>
    </location>
</feature>
<feature type="helix" evidence="12">
    <location>
        <begin position="282"/>
        <end position="284"/>
    </location>
</feature>
<feature type="helix" evidence="12">
    <location>
        <begin position="292"/>
        <end position="303"/>
    </location>
</feature>
<feature type="strand" evidence="12">
    <location>
        <begin position="311"/>
        <end position="323"/>
    </location>
</feature>
<feature type="turn" evidence="12">
    <location>
        <begin position="324"/>
        <end position="326"/>
    </location>
</feature>
<feature type="strand" evidence="12">
    <location>
        <begin position="330"/>
        <end position="334"/>
    </location>
</feature>
<feature type="strand" evidence="12">
    <location>
        <begin position="337"/>
        <end position="344"/>
    </location>
</feature>
<feature type="helix" evidence="12">
    <location>
        <begin position="350"/>
        <end position="364"/>
    </location>
</feature>
<dbReference type="EC" id="1.1.3.21" evidence="2 4"/>
<dbReference type="EMBL" id="U00089">
    <property type="protein sequence ID" value="AAB95751.1"/>
    <property type="molecule type" value="Genomic_DNA"/>
</dbReference>
<dbReference type="PIR" id="S73429">
    <property type="entry name" value="S73429"/>
</dbReference>
<dbReference type="RefSeq" id="NP_109739.1">
    <property type="nucleotide sequence ID" value="NC_000912.1"/>
</dbReference>
<dbReference type="RefSeq" id="WP_010874408.1">
    <property type="nucleotide sequence ID" value="NC_000912.1"/>
</dbReference>
<dbReference type="PDB" id="4X9M">
    <property type="method" value="X-ray"/>
    <property type="resolution" value="2.40 A"/>
    <property type="chains" value="A=1-384"/>
</dbReference>
<dbReference type="PDB" id="4X9N">
    <property type="method" value="X-ray"/>
    <property type="resolution" value="2.50 A"/>
    <property type="chains" value="A=1-384"/>
</dbReference>
<dbReference type="PDBsum" id="4X9M"/>
<dbReference type="PDBsum" id="4X9N"/>
<dbReference type="SMR" id="P75063"/>
<dbReference type="IntAct" id="P75063">
    <property type="interactions" value="1"/>
</dbReference>
<dbReference type="STRING" id="272634.MPN_051"/>
<dbReference type="EnsemblBacteria" id="AAB95751">
    <property type="protein sequence ID" value="AAB95751"/>
    <property type="gene ID" value="MPN_051"/>
</dbReference>
<dbReference type="KEGG" id="mpn:MPN_051"/>
<dbReference type="PATRIC" id="fig|272634.6.peg.51"/>
<dbReference type="HOGENOM" id="CLU_024775_3_0_14"/>
<dbReference type="OrthoDB" id="9801699at2"/>
<dbReference type="BioCyc" id="MPNE272634:G1GJ3-74-MONOMER"/>
<dbReference type="UniPathway" id="UPA00618">
    <property type="reaction ID" value="UER00674"/>
</dbReference>
<dbReference type="EvolutionaryTrace" id="P75063"/>
<dbReference type="Proteomes" id="UP000000808">
    <property type="component" value="Chromosome"/>
</dbReference>
<dbReference type="GO" id="GO:0005737">
    <property type="term" value="C:cytoplasm"/>
    <property type="evidence" value="ECO:0007669"/>
    <property type="project" value="UniProtKB-SubCell"/>
</dbReference>
<dbReference type="GO" id="GO:0005886">
    <property type="term" value="C:plasma membrane"/>
    <property type="evidence" value="ECO:0007669"/>
    <property type="project" value="UniProtKB-SubCell"/>
</dbReference>
<dbReference type="GO" id="GO:0016491">
    <property type="term" value="F:oxidoreductase activity"/>
    <property type="evidence" value="ECO:0007669"/>
    <property type="project" value="UniProtKB-KW"/>
</dbReference>
<dbReference type="GO" id="GO:0019563">
    <property type="term" value="P:glycerol catabolic process"/>
    <property type="evidence" value="ECO:0007669"/>
    <property type="project" value="UniProtKB-UniPathway"/>
</dbReference>
<dbReference type="Gene3D" id="3.30.9.10">
    <property type="entry name" value="D-Amino Acid Oxidase, subunit A, domain 2"/>
    <property type="match status" value="1"/>
</dbReference>
<dbReference type="Gene3D" id="3.50.50.60">
    <property type="entry name" value="FAD/NAD(P)-binding domain"/>
    <property type="match status" value="1"/>
</dbReference>
<dbReference type="InterPro" id="IPR006076">
    <property type="entry name" value="FAD-dep_OxRdtase"/>
</dbReference>
<dbReference type="InterPro" id="IPR036188">
    <property type="entry name" value="FAD/NAD-bd_sf"/>
</dbReference>
<dbReference type="InterPro" id="IPR052745">
    <property type="entry name" value="G3P_Oxidase/Oxidoreductase"/>
</dbReference>
<dbReference type="NCBIfam" id="NF033460">
    <property type="entry name" value="glycerol3P_ox_II"/>
    <property type="match status" value="1"/>
</dbReference>
<dbReference type="PANTHER" id="PTHR42720:SF1">
    <property type="entry name" value="GLYCEROL 3-PHOSPHATE OXIDASE"/>
    <property type="match status" value="1"/>
</dbReference>
<dbReference type="PANTHER" id="PTHR42720">
    <property type="entry name" value="GLYCEROL-3-PHOSPHATE DEHYDROGENASE"/>
    <property type="match status" value="1"/>
</dbReference>
<dbReference type="Pfam" id="PF01266">
    <property type="entry name" value="DAO"/>
    <property type="match status" value="1"/>
</dbReference>
<dbReference type="SUPFAM" id="SSF54373">
    <property type="entry name" value="FAD-linked reductases, C-terminal domain"/>
    <property type="match status" value="1"/>
</dbReference>
<dbReference type="SUPFAM" id="SSF51905">
    <property type="entry name" value="FAD/NAD(P)-binding domain"/>
    <property type="match status" value="1"/>
</dbReference>
<dbReference type="PROSITE" id="PS51257">
    <property type="entry name" value="PROKAR_LIPOPROTEIN"/>
    <property type="match status" value="1"/>
</dbReference>
<accession>P75063</accession>
<proteinExistence type="evidence at protein level"/>
<sequence>METRDVLIVGGGVIGCATAYELSQYKLKVTLVEKHHYLAQETSHANSGVIHTGIDPNPHKLTAKYNILGKKLWLNTYFKRLGFPRQKIRTLIVAFNEMEREQLEVLKQRGIANQINLEDIQMLSKEETLKLEPYVNPEIVAGLKIEGSWAIDPVLASKCLALAAQQNKVQICTNTEVTNISKQVDGTYLVWTNNETTPSFKVKKIIDAAGHYADYLAHLAKADDFEQTTRRGQYVVVTNQGELHLNSMVFMVPTIHGKGVIVSPMLDGNFLVGPTALDGVDKEATRYITKDAPCMLTKIGKHMVPSLNINNALISFAGSRPIDKATNDFIIRVAHNDPDFVILGGMKSPGLTAAPAIVREAVRLLNWKLTKKPNWNGKYNLPWI</sequence>
<reference key="1">
    <citation type="journal article" date="1996" name="Nucleic Acids Res.">
        <title>Complete sequence analysis of the genome of the bacterium Mycoplasma pneumoniae.</title>
        <authorList>
            <person name="Himmelreich R."/>
            <person name="Hilbert H."/>
            <person name="Plagens H."/>
            <person name="Pirkl E."/>
            <person name="Li B.-C."/>
            <person name="Herrmann R."/>
        </authorList>
    </citation>
    <scope>NUCLEOTIDE SEQUENCE [LARGE SCALE GENOMIC DNA]</scope>
    <source>
        <strain>ATCC 29342 / M129 / Subtype 1</strain>
    </source>
</reference>
<reference key="2">
    <citation type="journal article" date="2009" name="J. Bacteriol.">
        <title>Glycerol metabolism is important for cytotoxicity of Mycoplasma pneumoniae.</title>
        <authorList>
            <person name="Hames C."/>
            <person name="Halbedel S."/>
            <person name="Hoppert M."/>
            <person name="Frey J."/>
            <person name="Stuelke J."/>
        </authorList>
    </citation>
    <scope>FUNCTION</scope>
    <scope>CATALYTIC ACTIVITY</scope>
    <scope>DISRUPTION PHENOTYPE</scope>
    <scope>SUBCELLULAR LOCATION</scope>
    <scope>INDUCTION</scope>
    <scope>PATHWAY</scope>
    <source>
        <strain>ATCC 29342 / M129 / Subtype 1</strain>
    </source>
</reference>
<reference key="3">
    <citation type="journal article" date="2015" name="FEBS J.">
        <title>Kinetic mechanism of L-alpha-glycerophosphate oxidase from Mycoplasma pneumoniae.</title>
        <authorList>
            <person name="Maenpuen S."/>
            <person name="Watthaisong P."/>
            <person name="Supon P."/>
            <person name="Sucharitakul J."/>
            <person name="Parsonage D."/>
            <person name="Karplus P.A."/>
            <person name="Claiborne A."/>
            <person name="Chaiyen P."/>
        </authorList>
    </citation>
    <scope>FUNCTION</scope>
    <scope>CATALYTIC ACTIVITY</scope>
    <scope>BIOPHYSICOCHEMICAL PROPERTIES</scope>
    <scope>COFACTOR</scope>
    <scope>REACTION MECHANISM</scope>
</reference>
<reference evidence="10 11" key="4">
    <citation type="journal article" date="2015" name="FEBS J.">
        <title>Structure and proposed mechanism of L-alpha-glycerophosphate oxidase from Mycoplasma pneumoniae.</title>
        <authorList>
            <person name="Elkhal C.K."/>
            <person name="Kean K.M."/>
            <person name="Parsonage D."/>
            <person name="Maenpuen S."/>
            <person name="Chaiyen P."/>
            <person name="Claiborne A."/>
            <person name="Karplus P.A."/>
        </authorList>
    </citation>
    <scope>X-RAY CRYSTALLOGRAPHY (2.40 ANGSTROMS) IN COMPLEX WITH FAD AND GLYCEROL-3-PHOSPHATE</scope>
    <scope>COFACTOR</scope>
    <scope>SUBUNIT</scope>
    <scope>ACTIVE SITE</scope>
</reference>
<organism>
    <name type="scientific">Mycoplasma pneumoniae (strain ATCC 29342 / M129 / Subtype 1)</name>
    <name type="common">Mycoplasmoides pneumoniae</name>
    <dbReference type="NCBI Taxonomy" id="272634"/>
    <lineage>
        <taxon>Bacteria</taxon>
        <taxon>Bacillati</taxon>
        <taxon>Mycoplasmatota</taxon>
        <taxon>Mycoplasmoidales</taxon>
        <taxon>Mycoplasmoidaceae</taxon>
        <taxon>Mycoplasmoides</taxon>
    </lineage>
</organism>
<evidence type="ECO:0000255" key="1">
    <source>
        <dbReference type="PROSITE-ProRule" id="PRU00303"/>
    </source>
</evidence>
<evidence type="ECO:0000269" key="2">
    <source>
    </source>
</evidence>
<evidence type="ECO:0000269" key="3">
    <source>
    </source>
</evidence>
<evidence type="ECO:0000269" key="4">
    <source>
    </source>
</evidence>
<evidence type="ECO:0000303" key="5">
    <source>
    </source>
</evidence>
<evidence type="ECO:0000303" key="6">
    <source>
    </source>
</evidence>
<evidence type="ECO:0000303" key="7">
    <source>
    </source>
</evidence>
<evidence type="ECO:0000305" key="8">
    <source>
    </source>
</evidence>
<evidence type="ECO:0000312" key="9">
    <source>
        <dbReference type="EMBL" id="AAB95751.1"/>
    </source>
</evidence>
<evidence type="ECO:0007744" key="10">
    <source>
        <dbReference type="PDB" id="4X9M"/>
    </source>
</evidence>
<evidence type="ECO:0007744" key="11">
    <source>
        <dbReference type="PDB" id="4X9N"/>
    </source>
</evidence>
<evidence type="ECO:0007829" key="12">
    <source>
        <dbReference type="PDB" id="4X9M"/>
    </source>
</evidence>
<keyword id="KW-0002">3D-structure</keyword>
<keyword id="KW-1003">Cell membrane</keyword>
<keyword id="KW-0963">Cytoplasm</keyword>
<keyword id="KW-0274">FAD</keyword>
<keyword id="KW-0285">Flavoprotein</keyword>
<keyword id="KW-0319">Glycerol metabolism</keyword>
<keyword id="KW-0449">Lipoprotein</keyword>
<keyword id="KW-0472">Membrane</keyword>
<keyword id="KW-0560">Oxidoreductase</keyword>
<keyword id="KW-0564">Palmitate</keyword>
<keyword id="KW-1185">Reference proteome</keyword>
<keyword id="KW-0732">Signal</keyword>
<keyword id="KW-0843">Virulence</keyword>
<protein>
    <recommendedName>
        <fullName evidence="5">Glycerol 3-phosphate oxidase</fullName>
        <shortName evidence="6 7">GlpO</shortName>
        <ecNumber evidence="2 4">1.1.3.21</ecNumber>
    </recommendedName>
    <alternativeName>
        <fullName evidence="6 7">L-alpha-glycerophosphate oxidase</fullName>
    </alternativeName>
</protein>
<name>GLPO_MYCPN</name>
<gene>
    <name evidence="5 9" type="primary">glpD</name>
    <name type="ordered locus">MPN_051</name>
    <name type="ORF">D09_orf384</name>
    <name type="ORF">MP103</name>
</gene>
<comment type="function">
    <text evidence="2 4">Catalyzes the oxidation of glycerol 3-phosphate to dihydroxyacetone phosphate (DHAP), with a reduction of O2 to H2O2. The formation of hydrogen peroxide by this enzyme is crucial for cytotoxic effects of M.pneumoniae on host cells. Is involved in the metabolism of glycerol and is essential for glycerol utilization; glycerol is one of the few carbon sources that can be utilized by M.pneumoniae for growth (PubMed:19028882). To a lesser extent, is also able to use glyceraldehyde 3-phosphate (GAP), an intermediate in the glycolysis pathway, as a substrate (but the structure of the product has not been elucidated). Therefore, in the absence of glycerol, GAP may serve as a substrate in the GlpO reaction to supply H2O2 during mycoplasma infection (PubMed:25712468). Does not show any dehydrogenase activity with NAD(+) (PubMed:19028882).</text>
</comment>
<comment type="catalytic activity">
    <reaction evidence="2 4">
        <text>sn-glycerol 3-phosphate + O2 = dihydroxyacetone phosphate + H2O2</text>
        <dbReference type="Rhea" id="RHEA:18369"/>
        <dbReference type="ChEBI" id="CHEBI:15379"/>
        <dbReference type="ChEBI" id="CHEBI:16240"/>
        <dbReference type="ChEBI" id="CHEBI:57597"/>
        <dbReference type="ChEBI" id="CHEBI:57642"/>
        <dbReference type="EC" id="1.1.3.21"/>
    </reaction>
    <physiologicalReaction direction="left-to-right" evidence="2">
        <dbReference type="Rhea" id="RHEA:18370"/>
    </physiologicalReaction>
</comment>
<comment type="cofactor">
    <cofactor evidence="2 4">
        <name>FAD</name>
        <dbReference type="ChEBI" id="CHEBI:57692"/>
    </cofactor>
</comment>
<comment type="biophysicochemical properties">
    <kinetics>
        <KM evidence="4">5.5 mM for sn-glycerol 3-phosphate (at pH 7 and 4 degrees Celsius)</KM>
        <KM evidence="4">55 uM for O2 (at pH 7 and 4 degrees Celsius)</KM>
        <KM evidence="4">12 mM for sn-glycerol 3-phosphate (at pH 7 and 25 degrees Celsius)</KM>
        <KM evidence="4">1.8 mM for D/L-glyceraldehyde 3-phosphate (at pH 7 and 25 degrees Celsius)</KM>
        <text evidence="4">kcat is 4.2 sec(-1) with sn-glycerol 3-phosphate as substrate (at pH 7 and 4 degrees Celsius). kcat is 60.1 sec(-1) with sn-glycerol 3-phosphate as substrate (at pH 7 and 25 degrees Celsius). kcat is 0.6 sec(-1) with sn-glycerol 3-phosphate as substrate (at pH 7 and 25 degrees Celsius).</text>
    </kinetics>
</comment>
<comment type="pathway">
    <text evidence="2">Polyol metabolism; glycerol degradation via glycerol kinase pathway; glycerone phosphate from sn-glycerol 3-phosphate (aerobic route): step 1/1.</text>
</comment>
<comment type="subunit">
    <text evidence="3">Monomer.</text>
</comment>
<comment type="subcellular location">
    <subcellularLocation>
        <location evidence="2">Cytoplasm</location>
    </subcellularLocation>
    <subcellularLocation>
        <location evidence="1 2">Cell membrane</location>
        <topology evidence="1">Lipid-anchor</topology>
    </subcellularLocation>
    <text evidence="2">Is present predominantly in the cytoplasm, but a few proteins can also be detected at the cell surface.</text>
</comment>
<comment type="induction">
    <text evidence="2">Constitutively expressed.</text>
</comment>
<comment type="disruption phenotype">
    <text evidence="2">Cells lacking this gene do not grow at all in glycerol-containing medium, and exhibit a significantly reduced formation of hydrogen peroxide and a severely reduced cytotoxicity.</text>
</comment>
<comment type="miscellaneous">
    <text evidence="4">The reaction mechanism follows a ping-pong model; after flavin-mediated substrate oxidation, DHAP leaves rapidly prior to the oxygen reaction that reoxidizes the flavin and produces H2O2.</text>
</comment>